<gene>
    <name evidence="6" type="primary">FIM3</name>
    <name evidence="7" type="ordered locus">At5g55400</name>
    <name evidence="8" type="ORF">MTE17.11</name>
</gene>
<evidence type="ECO:0000250" key="1">
    <source>
        <dbReference type="UniProtKB" id="Q7G188"/>
    </source>
</evidence>
<evidence type="ECO:0000255" key="2">
    <source>
        <dbReference type="PROSITE-ProRule" id="PRU00044"/>
    </source>
</evidence>
<evidence type="ECO:0000255" key="3">
    <source>
        <dbReference type="PROSITE-ProRule" id="PRU00300"/>
    </source>
</evidence>
<evidence type="ECO:0000255" key="4">
    <source>
        <dbReference type="PROSITE-ProRule" id="PRU00448"/>
    </source>
</evidence>
<evidence type="ECO:0000256" key="5">
    <source>
        <dbReference type="SAM" id="MobiDB-lite"/>
    </source>
</evidence>
<evidence type="ECO:0000305" key="6"/>
<evidence type="ECO:0000312" key="7">
    <source>
        <dbReference type="Araport" id="AT5G55400"/>
    </source>
</evidence>
<evidence type="ECO:0000312" key="8">
    <source>
        <dbReference type="EMBL" id="BAB08557.1"/>
    </source>
</evidence>
<comment type="function">
    <text evidence="1">Cross-links actin filaments (F-actin). Stabilizes and prevents F-actin depolymerization mediated by profilin. May regulate actin cytoarchitecture, cell cycle, cell division, cell elongation and cytoplasmic tractus.</text>
</comment>
<comment type="subunit">
    <text evidence="1">Interacts with F-actin.</text>
</comment>
<comment type="subcellular location">
    <subcellularLocation>
        <location evidence="1">Cytoplasm</location>
        <location evidence="1">Cytoskeleton</location>
    </subcellularLocation>
</comment>
<protein>
    <recommendedName>
        <fullName evidence="6">Fimbrin-3</fullName>
        <shortName>AtFIM3</shortName>
    </recommendedName>
    <alternativeName>
        <fullName evidence="6">Fimbrin3</fullName>
    </alternativeName>
</protein>
<reference key="1">
    <citation type="journal article" date="1998" name="DNA Res.">
        <title>Structural analysis of Arabidopsis thaliana chromosome 5. VII. Sequence features of the regions of 1,013,767 bp covered by sixteen physically assigned P1 and TAC clones.</title>
        <authorList>
            <person name="Nakamura Y."/>
            <person name="Sato S."/>
            <person name="Asamizu E."/>
            <person name="Kaneko T."/>
            <person name="Kotani H."/>
            <person name="Miyajima N."/>
            <person name="Tabata S."/>
        </authorList>
    </citation>
    <scope>NUCLEOTIDE SEQUENCE [LARGE SCALE GENOMIC DNA]</scope>
    <source>
        <strain>cv. Columbia</strain>
    </source>
</reference>
<reference key="2">
    <citation type="journal article" date="2017" name="Plant J.">
        <title>Araport11: a complete reannotation of the Arabidopsis thaliana reference genome.</title>
        <authorList>
            <person name="Cheng C.Y."/>
            <person name="Krishnakumar V."/>
            <person name="Chan A.P."/>
            <person name="Thibaud-Nissen F."/>
            <person name="Schobel S."/>
            <person name="Town C.D."/>
        </authorList>
    </citation>
    <scope>GENOME REANNOTATION</scope>
    <source>
        <strain>cv. Columbia</strain>
    </source>
</reference>
<name>FIMB3_ARATH</name>
<accession>Q9FJ70</accession>
<keyword id="KW-0009">Actin-binding</keyword>
<keyword id="KW-0106">Calcium</keyword>
<keyword id="KW-0963">Cytoplasm</keyword>
<keyword id="KW-0206">Cytoskeleton</keyword>
<keyword id="KW-0479">Metal-binding</keyword>
<keyword id="KW-1185">Reference proteome</keyword>
<keyword id="KW-0677">Repeat</keyword>
<organism>
    <name type="scientific">Arabidopsis thaliana</name>
    <name type="common">Mouse-ear cress</name>
    <dbReference type="NCBI Taxonomy" id="3702"/>
    <lineage>
        <taxon>Eukaryota</taxon>
        <taxon>Viridiplantae</taxon>
        <taxon>Streptophyta</taxon>
        <taxon>Embryophyta</taxon>
        <taxon>Tracheophyta</taxon>
        <taxon>Spermatophyta</taxon>
        <taxon>Magnoliopsida</taxon>
        <taxon>eudicotyledons</taxon>
        <taxon>Gunneridae</taxon>
        <taxon>Pentapetalae</taxon>
        <taxon>rosids</taxon>
        <taxon>malvids</taxon>
        <taxon>Brassicales</taxon>
        <taxon>Brassicaceae</taxon>
        <taxon>Camelineae</taxon>
        <taxon>Arabidopsis</taxon>
    </lineage>
</organism>
<feature type="chain" id="PRO_0000073755" description="Fimbrin-3">
    <location>
        <begin position="1"/>
        <end position="714"/>
    </location>
</feature>
<feature type="domain" description="EF-hand" evidence="4">
    <location>
        <begin position="7"/>
        <end position="55"/>
    </location>
</feature>
<feature type="domain" description="Calponin-homology (CH) 1" evidence="2">
    <location>
        <begin position="124"/>
        <end position="241"/>
    </location>
</feature>
<feature type="domain" description="Calponin-homology (CH) 2" evidence="2">
    <location>
        <begin position="269"/>
        <end position="372"/>
    </location>
</feature>
<feature type="domain" description="Calponin-homology (CH) 3" evidence="2">
    <location>
        <begin position="393"/>
        <end position="499"/>
    </location>
</feature>
<feature type="domain" description="Calponin-homology (CH) 4" evidence="2">
    <location>
        <begin position="514"/>
        <end position="622"/>
    </location>
</feature>
<feature type="region of interest" description="Actin-binding 1" evidence="3">
    <location>
        <begin position="124"/>
        <end position="372"/>
    </location>
</feature>
<feature type="region of interest" description="Actin-binding 2" evidence="3">
    <location>
        <begin position="393"/>
        <end position="622"/>
    </location>
</feature>
<feature type="region of interest" description="Disordered" evidence="5">
    <location>
        <begin position="628"/>
        <end position="694"/>
    </location>
</feature>
<feature type="compositionally biased region" description="Low complexity" evidence="5">
    <location>
        <begin position="628"/>
        <end position="662"/>
    </location>
</feature>
<feature type="compositionally biased region" description="Polar residues" evidence="5">
    <location>
        <begin position="670"/>
        <end position="680"/>
    </location>
</feature>
<feature type="compositionally biased region" description="Acidic residues" evidence="5">
    <location>
        <begin position="681"/>
        <end position="694"/>
    </location>
</feature>
<dbReference type="EMBL" id="AB015479">
    <property type="protein sequence ID" value="BAB08557.1"/>
    <property type="molecule type" value="Genomic_DNA"/>
</dbReference>
<dbReference type="EMBL" id="CP002688">
    <property type="protein sequence ID" value="AED96625.1"/>
    <property type="molecule type" value="Genomic_DNA"/>
</dbReference>
<dbReference type="EMBL" id="CP002688">
    <property type="protein sequence ID" value="ANM70910.1"/>
    <property type="molecule type" value="Genomic_DNA"/>
</dbReference>
<dbReference type="EMBL" id="CP002688">
    <property type="protein sequence ID" value="ANM70911.1"/>
    <property type="molecule type" value="Genomic_DNA"/>
</dbReference>
<dbReference type="RefSeq" id="NP_001318801.1">
    <property type="nucleotide sequence ID" value="NM_001345124.1"/>
</dbReference>
<dbReference type="RefSeq" id="NP_001332484.1">
    <property type="nucleotide sequence ID" value="NM_001345126.1"/>
</dbReference>
<dbReference type="RefSeq" id="NP_001332485.1">
    <property type="nucleotide sequence ID" value="NM_001345125.1"/>
</dbReference>
<dbReference type="SMR" id="Q9FJ70"/>
<dbReference type="FunCoup" id="Q9FJ70">
    <property type="interactions" value="2338"/>
</dbReference>
<dbReference type="STRING" id="3702.Q9FJ70"/>
<dbReference type="PaxDb" id="3702-AT5G55400.1"/>
<dbReference type="ProteomicsDB" id="230098"/>
<dbReference type="EnsemblPlants" id="AT5G55400.1">
    <property type="protein sequence ID" value="AT5G55400.1"/>
    <property type="gene ID" value="AT5G55400"/>
</dbReference>
<dbReference type="EnsemblPlants" id="AT5G55400.2">
    <property type="protein sequence ID" value="AT5G55400.2"/>
    <property type="gene ID" value="AT5G55400"/>
</dbReference>
<dbReference type="EnsemblPlants" id="AT5G55400.3">
    <property type="protein sequence ID" value="AT5G55400.3"/>
    <property type="gene ID" value="AT5G55400"/>
</dbReference>
<dbReference type="GeneID" id="835633"/>
<dbReference type="Gramene" id="AT5G55400.1">
    <property type="protein sequence ID" value="AT5G55400.1"/>
    <property type="gene ID" value="AT5G55400"/>
</dbReference>
<dbReference type="Gramene" id="AT5G55400.2">
    <property type="protein sequence ID" value="AT5G55400.2"/>
    <property type="gene ID" value="AT5G55400"/>
</dbReference>
<dbReference type="Gramene" id="AT5G55400.3">
    <property type="protein sequence ID" value="AT5G55400.3"/>
    <property type="gene ID" value="AT5G55400"/>
</dbReference>
<dbReference type="KEGG" id="ath:AT5G55400"/>
<dbReference type="Araport" id="AT5G55400"/>
<dbReference type="TAIR" id="AT5G55400">
    <property type="gene designation" value="ATFIM4"/>
</dbReference>
<dbReference type="eggNOG" id="KOG0046">
    <property type="taxonomic scope" value="Eukaryota"/>
</dbReference>
<dbReference type="HOGENOM" id="CLU_015284_3_1_1"/>
<dbReference type="InParanoid" id="Q9FJ70"/>
<dbReference type="OMA" id="VNHPPFK"/>
<dbReference type="OrthoDB" id="431378at2759"/>
<dbReference type="PhylomeDB" id="Q9FJ70"/>
<dbReference type="PRO" id="PR:Q9FJ70"/>
<dbReference type="Proteomes" id="UP000006548">
    <property type="component" value="Chromosome 5"/>
</dbReference>
<dbReference type="ExpressionAtlas" id="Q9FJ70">
    <property type="expression patterns" value="baseline and differential"/>
</dbReference>
<dbReference type="GO" id="GO:0005856">
    <property type="term" value="C:cytoskeleton"/>
    <property type="evidence" value="ECO:0007669"/>
    <property type="project" value="UniProtKB-SubCell"/>
</dbReference>
<dbReference type="GO" id="GO:0000325">
    <property type="term" value="C:plant-type vacuole"/>
    <property type="evidence" value="ECO:0007005"/>
    <property type="project" value="TAIR"/>
</dbReference>
<dbReference type="GO" id="GO:0051015">
    <property type="term" value="F:actin filament binding"/>
    <property type="evidence" value="ECO:0007669"/>
    <property type="project" value="InterPro"/>
</dbReference>
<dbReference type="GO" id="GO:0046872">
    <property type="term" value="F:metal ion binding"/>
    <property type="evidence" value="ECO:0007669"/>
    <property type="project" value="UniProtKB-KW"/>
</dbReference>
<dbReference type="GO" id="GO:0051017">
    <property type="term" value="P:actin filament bundle assembly"/>
    <property type="evidence" value="ECO:0000314"/>
    <property type="project" value="TAIR"/>
</dbReference>
<dbReference type="GO" id="GO:0051639">
    <property type="term" value="P:actin filament network formation"/>
    <property type="evidence" value="ECO:0000314"/>
    <property type="project" value="TAIR"/>
</dbReference>
<dbReference type="CDD" id="cd21293">
    <property type="entry name" value="CH_AtFIM_like_rpt1"/>
    <property type="match status" value="1"/>
</dbReference>
<dbReference type="CDD" id="cd21296">
    <property type="entry name" value="CH_AtFIM_like_rpt2"/>
    <property type="match status" value="1"/>
</dbReference>
<dbReference type="CDD" id="cd21299">
    <property type="entry name" value="CH_AtFIM_like_rpt3"/>
    <property type="match status" value="1"/>
</dbReference>
<dbReference type="CDD" id="cd21302">
    <property type="entry name" value="CH_AtFIM_like_rpt4"/>
    <property type="match status" value="1"/>
</dbReference>
<dbReference type="FunFam" id="1.10.418.10:FF:000045">
    <property type="entry name" value="Fimbrin-1 isoform A"/>
    <property type="match status" value="1"/>
</dbReference>
<dbReference type="FunFam" id="1.10.418.10:FF:000041">
    <property type="entry name" value="Fimbrin-2 isoform A"/>
    <property type="match status" value="1"/>
</dbReference>
<dbReference type="FunFam" id="1.10.418.10:FF:000031">
    <property type="entry name" value="Fimbrin-2 like"/>
    <property type="match status" value="1"/>
</dbReference>
<dbReference type="FunFam" id="1.10.418.10:FF:000034">
    <property type="entry name" value="Fimbrin-2 like"/>
    <property type="match status" value="1"/>
</dbReference>
<dbReference type="Gene3D" id="1.10.418.10">
    <property type="entry name" value="Calponin-like domain"/>
    <property type="match status" value="4"/>
</dbReference>
<dbReference type="Gene3D" id="1.10.238.10">
    <property type="entry name" value="EF-hand"/>
    <property type="match status" value="1"/>
</dbReference>
<dbReference type="InterPro" id="IPR001589">
    <property type="entry name" value="Actinin_actin-bd_CS"/>
</dbReference>
<dbReference type="InterPro" id="IPR001715">
    <property type="entry name" value="CH_dom"/>
</dbReference>
<dbReference type="InterPro" id="IPR036872">
    <property type="entry name" value="CH_dom_sf"/>
</dbReference>
<dbReference type="InterPro" id="IPR011992">
    <property type="entry name" value="EF-hand-dom_pair"/>
</dbReference>
<dbReference type="InterPro" id="IPR039959">
    <property type="entry name" value="Fimbrin/Plastin"/>
</dbReference>
<dbReference type="PANTHER" id="PTHR19961:SF64">
    <property type="entry name" value="FIMBRIN-3"/>
    <property type="match status" value="1"/>
</dbReference>
<dbReference type="PANTHER" id="PTHR19961">
    <property type="entry name" value="FIMBRIN/PLASTIN"/>
    <property type="match status" value="1"/>
</dbReference>
<dbReference type="Pfam" id="PF00307">
    <property type="entry name" value="CH"/>
    <property type="match status" value="4"/>
</dbReference>
<dbReference type="SMART" id="SM00033">
    <property type="entry name" value="CH"/>
    <property type="match status" value="4"/>
</dbReference>
<dbReference type="SUPFAM" id="SSF47576">
    <property type="entry name" value="Calponin-homology domain, CH-domain"/>
    <property type="match status" value="1"/>
</dbReference>
<dbReference type="SUPFAM" id="SSF47473">
    <property type="entry name" value="EF-hand"/>
    <property type="match status" value="1"/>
</dbReference>
<dbReference type="PROSITE" id="PS00020">
    <property type="entry name" value="ACTININ_2"/>
    <property type="match status" value="1"/>
</dbReference>
<dbReference type="PROSITE" id="PS50021">
    <property type="entry name" value="CH"/>
    <property type="match status" value="4"/>
</dbReference>
<proteinExistence type="inferred from homology"/>
<sequence length="714" mass="79788">MSGFVGVIVSDPWLQSQLTQVELRSLNSKFVALKNQSGKVTLEDLPSVLVKVKSLSSSFKEKEIKEILGGLGSDYESDDDLDFESFLKVYLNLRDKAADKAGGGLKHSSSFLKAGTTTLHTINQSEKGSFVLHINRYLGDDPFLKQFLPLDPDSNDLYELVKDGVLLCKLINIAVPGTIDERAINTKRVLNPWERNENHTLCLNSAKAVGCSVVNIGTQDLAEGRPHLVLGLISQLIKIQLLADLSLKKMPQLVELVEDNEDIEEFLRLPPEKVLLKWMNFHLKKGGYKKTVGNFSSDLKDAQAYAYLLNVLAPEHCDPATLNAEDDLERANMVLEHAERMNCKRYLTAEEIVEGSSYLNLAFVAQIFHERNGLSTDGRFSFAEMMTEDLQTCRDERCYRLWINSLGIESYVNNVFEDVRNGWILLEVVDKVYPGSVNWKQASKPPIKMPFRKVENCNQVVKIGKEMRFSLVNVAGNDIVQGNKKLILGFLWQLMRTHMLQLLKSLRSRTRGKDMTDSEIISWANRKVRIMGRKSQIESFKDKSLSSGLFFLDLLWAVEPRVVNWNLVTKGESDDEKRLNATYIVSVARKLGCSVFLLPEDIVEVNQKMILILTASIMYWSLQQQSSSSESSSSSSDSSSTHSTTTTCTSTCTSTDASPAPSVTGEDEVSSLNGEVSSLTIEEDNEVSSLTIEEDNDADILSDITSISEEAANE</sequence>